<accession>Q31FT1</accession>
<organism>
    <name type="scientific">Hydrogenovibrio crunogenus (strain DSM 25203 / XCL-2)</name>
    <name type="common">Thiomicrospira crunogena</name>
    <dbReference type="NCBI Taxonomy" id="317025"/>
    <lineage>
        <taxon>Bacteria</taxon>
        <taxon>Pseudomonadati</taxon>
        <taxon>Pseudomonadota</taxon>
        <taxon>Gammaproteobacteria</taxon>
        <taxon>Thiotrichales</taxon>
        <taxon>Piscirickettsiaceae</taxon>
        <taxon>Hydrogenovibrio</taxon>
    </lineage>
</organism>
<sequence>MKIIEGNLTAQGLKVGLVIGRFNSFIVDSLVKGAIDTIVRHGGSEDNIEQVLVPGAFEIPIVAQKMAASGKYDAIVALGAVIRGGTPHFDYVAGECVKGIGQVALNSGVPVSFGVLTVDTIDQAIERAGTKAGNKGEECTLAAIETANVLKQI</sequence>
<keyword id="KW-0686">Riboflavin biosynthesis</keyword>
<keyword id="KW-0808">Transferase</keyword>
<gene>
    <name evidence="1" type="primary">ribH</name>
    <name type="ordered locus">Tcr_1397</name>
</gene>
<proteinExistence type="inferred from homology"/>
<dbReference type="EC" id="2.5.1.78" evidence="1"/>
<dbReference type="EMBL" id="CP000109">
    <property type="protein sequence ID" value="ABB41992.1"/>
    <property type="molecule type" value="Genomic_DNA"/>
</dbReference>
<dbReference type="SMR" id="Q31FT1"/>
<dbReference type="STRING" id="317025.Tcr_1397"/>
<dbReference type="KEGG" id="tcx:Tcr_1397"/>
<dbReference type="eggNOG" id="COG0054">
    <property type="taxonomic scope" value="Bacteria"/>
</dbReference>
<dbReference type="HOGENOM" id="CLU_089358_1_1_6"/>
<dbReference type="OrthoDB" id="9809709at2"/>
<dbReference type="UniPathway" id="UPA00275">
    <property type="reaction ID" value="UER00404"/>
</dbReference>
<dbReference type="GO" id="GO:0005829">
    <property type="term" value="C:cytosol"/>
    <property type="evidence" value="ECO:0007669"/>
    <property type="project" value="TreeGrafter"/>
</dbReference>
<dbReference type="GO" id="GO:0009349">
    <property type="term" value="C:riboflavin synthase complex"/>
    <property type="evidence" value="ECO:0007669"/>
    <property type="project" value="InterPro"/>
</dbReference>
<dbReference type="GO" id="GO:0000906">
    <property type="term" value="F:6,7-dimethyl-8-ribityllumazine synthase activity"/>
    <property type="evidence" value="ECO:0007669"/>
    <property type="project" value="UniProtKB-UniRule"/>
</dbReference>
<dbReference type="GO" id="GO:0009231">
    <property type="term" value="P:riboflavin biosynthetic process"/>
    <property type="evidence" value="ECO:0007669"/>
    <property type="project" value="UniProtKB-UniRule"/>
</dbReference>
<dbReference type="CDD" id="cd09209">
    <property type="entry name" value="Lumazine_synthase-I"/>
    <property type="match status" value="1"/>
</dbReference>
<dbReference type="FunFam" id="3.40.50.960:FF:000001">
    <property type="entry name" value="6,7-dimethyl-8-ribityllumazine synthase"/>
    <property type="match status" value="1"/>
</dbReference>
<dbReference type="Gene3D" id="3.40.50.960">
    <property type="entry name" value="Lumazine/riboflavin synthase"/>
    <property type="match status" value="1"/>
</dbReference>
<dbReference type="HAMAP" id="MF_00178">
    <property type="entry name" value="Lumazine_synth"/>
    <property type="match status" value="1"/>
</dbReference>
<dbReference type="InterPro" id="IPR034964">
    <property type="entry name" value="LS"/>
</dbReference>
<dbReference type="InterPro" id="IPR002180">
    <property type="entry name" value="LS/RS"/>
</dbReference>
<dbReference type="InterPro" id="IPR036467">
    <property type="entry name" value="LS/RS_sf"/>
</dbReference>
<dbReference type="NCBIfam" id="TIGR00114">
    <property type="entry name" value="lumazine-synth"/>
    <property type="match status" value="1"/>
</dbReference>
<dbReference type="NCBIfam" id="NF000812">
    <property type="entry name" value="PRK00061.1-4"/>
    <property type="match status" value="1"/>
</dbReference>
<dbReference type="PANTHER" id="PTHR21058:SF0">
    <property type="entry name" value="6,7-DIMETHYL-8-RIBITYLLUMAZINE SYNTHASE"/>
    <property type="match status" value="1"/>
</dbReference>
<dbReference type="PANTHER" id="PTHR21058">
    <property type="entry name" value="6,7-DIMETHYL-8-RIBITYLLUMAZINE SYNTHASE DMRL SYNTHASE LUMAZINE SYNTHASE"/>
    <property type="match status" value="1"/>
</dbReference>
<dbReference type="Pfam" id="PF00885">
    <property type="entry name" value="DMRL_synthase"/>
    <property type="match status" value="1"/>
</dbReference>
<dbReference type="SUPFAM" id="SSF52121">
    <property type="entry name" value="Lumazine synthase"/>
    <property type="match status" value="1"/>
</dbReference>
<feature type="chain" id="PRO_1000040541" description="6,7-dimethyl-8-ribityllumazine synthase">
    <location>
        <begin position="1"/>
        <end position="153"/>
    </location>
</feature>
<feature type="active site" description="Proton donor" evidence="1">
    <location>
        <position position="88"/>
    </location>
</feature>
<feature type="binding site" evidence="1">
    <location>
        <position position="22"/>
    </location>
    <ligand>
        <name>5-amino-6-(D-ribitylamino)uracil</name>
        <dbReference type="ChEBI" id="CHEBI:15934"/>
    </ligand>
</feature>
<feature type="binding site" evidence="1">
    <location>
        <begin position="56"/>
        <end position="58"/>
    </location>
    <ligand>
        <name>5-amino-6-(D-ribitylamino)uracil</name>
        <dbReference type="ChEBI" id="CHEBI:15934"/>
    </ligand>
</feature>
<feature type="binding site" evidence="1">
    <location>
        <begin position="80"/>
        <end position="82"/>
    </location>
    <ligand>
        <name>5-amino-6-(D-ribitylamino)uracil</name>
        <dbReference type="ChEBI" id="CHEBI:15934"/>
    </ligand>
</feature>
<feature type="binding site" evidence="1">
    <location>
        <begin position="85"/>
        <end position="86"/>
    </location>
    <ligand>
        <name>(2S)-2-hydroxy-3-oxobutyl phosphate</name>
        <dbReference type="ChEBI" id="CHEBI:58830"/>
    </ligand>
</feature>
<feature type="binding site" evidence="1">
    <location>
        <position position="113"/>
    </location>
    <ligand>
        <name>5-amino-6-(D-ribitylamino)uracil</name>
        <dbReference type="ChEBI" id="CHEBI:15934"/>
    </ligand>
</feature>
<feature type="binding site" evidence="1">
    <location>
        <position position="127"/>
    </location>
    <ligand>
        <name>(2S)-2-hydroxy-3-oxobutyl phosphate</name>
        <dbReference type="ChEBI" id="CHEBI:58830"/>
    </ligand>
</feature>
<reference key="1">
    <citation type="journal article" date="2006" name="PLoS Biol.">
        <title>The genome of deep-sea vent chemolithoautotroph Thiomicrospira crunogena XCL-2.</title>
        <authorList>
            <person name="Scott K.M."/>
            <person name="Sievert S.M."/>
            <person name="Abril F.N."/>
            <person name="Ball L.A."/>
            <person name="Barrett C.J."/>
            <person name="Blake R.A."/>
            <person name="Boller A.J."/>
            <person name="Chain P.S.G."/>
            <person name="Clark J.A."/>
            <person name="Davis C.R."/>
            <person name="Detter C."/>
            <person name="Do K.F."/>
            <person name="Dobrinski K.P."/>
            <person name="Faza B.I."/>
            <person name="Fitzpatrick K.A."/>
            <person name="Freyermuth S.K."/>
            <person name="Harmer T.L."/>
            <person name="Hauser L.J."/>
            <person name="Huegler M."/>
            <person name="Kerfeld C.A."/>
            <person name="Klotz M.G."/>
            <person name="Kong W.W."/>
            <person name="Land M."/>
            <person name="Lapidus A."/>
            <person name="Larimer F.W."/>
            <person name="Longo D.L."/>
            <person name="Lucas S."/>
            <person name="Malfatti S.A."/>
            <person name="Massey S.E."/>
            <person name="Martin D.D."/>
            <person name="McCuddin Z."/>
            <person name="Meyer F."/>
            <person name="Moore J.L."/>
            <person name="Ocampo L.H. Jr."/>
            <person name="Paul J.H."/>
            <person name="Paulsen I.T."/>
            <person name="Reep D.K."/>
            <person name="Ren Q."/>
            <person name="Ross R.L."/>
            <person name="Sato P.Y."/>
            <person name="Thomas P."/>
            <person name="Tinkham L.E."/>
            <person name="Zeruth G.T."/>
        </authorList>
    </citation>
    <scope>NUCLEOTIDE SEQUENCE [LARGE SCALE GENOMIC DNA]</scope>
    <source>
        <strain>DSM 25203 / XCL-2</strain>
    </source>
</reference>
<comment type="function">
    <text evidence="1">Catalyzes the formation of 6,7-dimethyl-8-ribityllumazine by condensation of 5-amino-6-(D-ribitylamino)uracil with 3,4-dihydroxy-2-butanone 4-phosphate. This is the penultimate step in the biosynthesis of riboflavin.</text>
</comment>
<comment type="catalytic activity">
    <reaction evidence="1">
        <text>(2S)-2-hydroxy-3-oxobutyl phosphate + 5-amino-6-(D-ribitylamino)uracil = 6,7-dimethyl-8-(1-D-ribityl)lumazine + phosphate + 2 H2O + H(+)</text>
        <dbReference type="Rhea" id="RHEA:26152"/>
        <dbReference type="ChEBI" id="CHEBI:15377"/>
        <dbReference type="ChEBI" id="CHEBI:15378"/>
        <dbReference type="ChEBI" id="CHEBI:15934"/>
        <dbReference type="ChEBI" id="CHEBI:43474"/>
        <dbReference type="ChEBI" id="CHEBI:58201"/>
        <dbReference type="ChEBI" id="CHEBI:58830"/>
        <dbReference type="EC" id="2.5.1.78"/>
    </reaction>
</comment>
<comment type="pathway">
    <text evidence="1">Cofactor biosynthesis; riboflavin biosynthesis; riboflavin from 2-hydroxy-3-oxobutyl phosphate and 5-amino-6-(D-ribitylamino)uracil: step 1/2.</text>
</comment>
<comment type="subunit">
    <text evidence="1">Forms an icosahedral capsid composed of 60 subunits, arranged as a dodecamer of pentamers.</text>
</comment>
<comment type="similarity">
    <text evidence="1">Belongs to the DMRL synthase family.</text>
</comment>
<name>RISB_HYDCU</name>
<evidence type="ECO:0000255" key="1">
    <source>
        <dbReference type="HAMAP-Rule" id="MF_00178"/>
    </source>
</evidence>
<protein>
    <recommendedName>
        <fullName evidence="1">6,7-dimethyl-8-ribityllumazine synthase</fullName>
        <shortName evidence="1">DMRL synthase</shortName>
        <shortName evidence="1">LS</shortName>
        <shortName evidence="1">Lumazine synthase</shortName>
        <ecNumber evidence="1">2.5.1.78</ecNumber>
    </recommendedName>
</protein>